<comment type="function">
    <text evidence="1">Required for DNA double-strand breaks (DSBs) formation in unsynapsed regions during meiotic recombination. Probably acts by forming a complex with IHO1 and REC114, which activates DSBs formation in unsynapsed regions, an essential step to ensure completion of synapsis.</text>
</comment>
<comment type="subunit">
    <text evidence="1 3">Part of the MCD recombinosome complex, at least composed of IHO1, REC114 and MEI4 (By similarity). Forms a complex with REC114; the interaction is required for MEI4 stability (PubMed:31704776). Interacts (via N-terminal domain) with REC114 (via C-terminal domain) (By similarity). Interacts with IHO1 (By similarity).</text>
</comment>
<comment type="interaction">
    <interactant intactId="EBI-19944212">
        <id>A8MW99</id>
    </interactant>
    <interactant intactId="EBI-13286382">
        <id>Q63HM1</id>
        <label>AFMID</label>
    </interactant>
    <organismsDiffer>false</organismsDiffer>
    <experiments>3</experiments>
</comment>
<comment type="interaction">
    <interactant intactId="EBI-19944212">
        <id>A8MW99</id>
    </interactant>
    <interactant intactId="EBI-8643161">
        <id>Q9NX04</id>
        <label>AIRIM</label>
    </interactant>
    <organismsDiffer>false</organismsDiffer>
    <experiments>3</experiments>
</comment>
<comment type="interaction">
    <interactant intactId="EBI-19944212">
        <id>A8MW99</id>
    </interactant>
    <interactant intactId="EBI-2949658">
        <id>O95429</id>
        <label>BAG4</label>
    </interactant>
    <organismsDiffer>false</organismsDiffer>
    <experiments>3</experiments>
</comment>
<comment type="interaction">
    <interactant intactId="EBI-19944212">
        <id>A8MW99</id>
    </interactant>
    <interactant intactId="EBI-741214">
        <id>Q9UFG5</id>
        <label>C19orf25</label>
    </interactant>
    <organismsDiffer>false</organismsDiffer>
    <experiments>3</experiments>
</comment>
<comment type="interaction">
    <interactant intactId="EBI-19944212">
        <id>A8MW99</id>
    </interactant>
    <interactant intactId="EBI-10311131">
        <id>Q9NP86</id>
        <label>CABP5</label>
    </interactant>
    <organismsDiffer>false</organismsDiffer>
    <experiments>3</experiments>
</comment>
<comment type="interaction">
    <interactant intactId="EBI-19944212">
        <id>A8MW99</id>
    </interactant>
    <interactant intactId="EBI-745859">
        <id>P55273</id>
        <label>CDKN2D</label>
    </interactant>
    <organismsDiffer>false</organismsDiffer>
    <experiments>3</experiments>
</comment>
<comment type="interaction">
    <interactant intactId="EBI-19944212">
        <id>A8MW99</id>
    </interactant>
    <interactant intactId="EBI-1020839">
        <id>Q13111</id>
        <label>CHAF1A</label>
    </interactant>
    <organismsDiffer>false</organismsDiffer>
    <experiments>3</experiments>
</comment>
<comment type="interaction">
    <interactant intactId="EBI-19944212">
        <id>A8MW99</id>
    </interactant>
    <interactant intactId="EBI-7097057">
        <id>Q96FN4</id>
        <label>CPNE2</label>
    </interactant>
    <organismsDiffer>false</organismsDiffer>
    <experiments>3</experiments>
</comment>
<comment type="interaction">
    <interactant intactId="EBI-19944212">
        <id>A8MW99</id>
    </interactant>
    <interactant intactId="EBI-3923092">
        <id>Q9H4G1</id>
        <label>CST9L</label>
    </interactant>
    <organismsDiffer>false</organismsDiffer>
    <experiments>3</experiments>
</comment>
<comment type="interaction">
    <interactant intactId="EBI-19944212">
        <id>A8MW99</id>
    </interactant>
    <interactant intactId="EBI-1774260">
        <id>Q8WZ74</id>
        <label>CTTNBP2</label>
    </interactant>
    <organismsDiffer>false</organismsDiffer>
    <experiments>3</experiments>
</comment>
<comment type="interaction">
    <interactant intactId="EBI-19944212">
        <id>A8MW99</id>
    </interactant>
    <interactant intactId="EBI-1220259">
        <id>P04053</id>
        <label>DNTT</label>
    </interactant>
    <organismsDiffer>false</organismsDiffer>
    <experiments>3</experiments>
</comment>
<comment type="interaction">
    <interactant intactId="EBI-19944212">
        <id>A8MW99</id>
    </interactant>
    <interactant intactId="EBI-373150">
        <id>P63241</id>
        <label>EIF5A</label>
    </interactant>
    <organismsDiffer>false</organismsDiffer>
    <experiments>3</experiments>
</comment>
<comment type="interaction">
    <interactant intactId="EBI-19944212">
        <id>A8MW99</id>
    </interactant>
    <interactant intactId="EBI-744771">
        <id>O75344</id>
        <label>FKBP6</label>
    </interactant>
    <organismsDiffer>false</organismsDiffer>
    <experiments>3</experiments>
</comment>
<comment type="interaction">
    <interactant intactId="EBI-19944212">
        <id>A8MW99</id>
    </interactant>
    <interactant intactId="EBI-401755">
        <id>P62993</id>
        <label>GRB2</label>
    </interactant>
    <organismsDiffer>false</organismsDiffer>
    <experiments>3</experiments>
</comment>
<comment type="interaction">
    <interactant intactId="EBI-19944212">
        <id>A8MW99</id>
    </interactant>
    <interactant intactId="EBI-3918847">
        <id>Q9H2F3</id>
        <label>HSD3B7</label>
    </interactant>
    <organismsDiffer>false</organismsDiffer>
    <experiments>3</experiments>
</comment>
<comment type="interaction">
    <interactant intactId="EBI-19944212">
        <id>A8MW99</id>
    </interactant>
    <interactant intactId="EBI-297509">
        <id>P46940</id>
        <label>IQGAP1</label>
    </interactant>
    <organismsDiffer>false</organismsDiffer>
    <experiments>3</experiments>
</comment>
<comment type="interaction">
    <interactant intactId="EBI-19944212">
        <id>A8MW99</id>
    </interactant>
    <interactant intactId="EBI-10274069">
        <id>Q8TCE9</id>
        <label>LGALS14</label>
    </interactant>
    <organismsDiffer>false</organismsDiffer>
    <experiments>3</experiments>
</comment>
<comment type="interaction">
    <interactant intactId="EBI-19944212">
        <id>A8MW99</id>
    </interactant>
    <interactant intactId="EBI-2683507">
        <id>Q8N5G2</id>
        <label>MACO1</label>
    </interactant>
    <organismsDiffer>false</organismsDiffer>
    <experiments>3</experiments>
</comment>
<comment type="interaction">
    <interactant intactId="EBI-19944212">
        <id>A8MW99</id>
    </interactant>
    <interactant intactId="EBI-8652459">
        <id>Q8WXB1</id>
        <label>METTL21A</label>
    </interactant>
    <organismsDiffer>false</organismsDiffer>
    <experiments>3</experiments>
</comment>
<comment type="interaction">
    <interactant intactId="EBI-19944212">
        <id>A8MW99</id>
    </interactant>
    <interactant intactId="EBI-8852072">
        <id>Q9UH92-3</id>
        <label>MLX</label>
    </interactant>
    <organismsDiffer>false</organismsDiffer>
    <experiments>3</experiments>
</comment>
<comment type="interaction">
    <interactant intactId="EBI-19944212">
        <id>A8MW99</id>
    </interactant>
    <interactant intactId="EBI-744593">
        <id>Q96QG7</id>
        <label>MTMR9</label>
    </interactant>
    <organismsDiffer>false</organismsDiffer>
    <experiments>3</experiments>
</comment>
<comment type="interaction">
    <interactant intactId="EBI-19944212">
        <id>A8MW99</id>
    </interactant>
    <interactant intactId="EBI-14093244">
        <id>Q9ULV0-2</id>
        <label>MYO5B</label>
    </interactant>
    <organismsDiffer>false</organismsDiffer>
    <experiments>3</experiments>
</comment>
<comment type="interaction">
    <interactant intactId="EBI-19944212">
        <id>A8MW99</id>
    </interactant>
    <interactant intactId="EBI-10311409">
        <id>Q9NPG2</id>
        <label>NGB</label>
    </interactant>
    <organismsDiffer>false</organismsDiffer>
    <experiments>3</experiments>
</comment>
<comment type="interaction">
    <interactant intactId="EBI-19944212">
        <id>A8MW99</id>
    </interactant>
    <interactant intactId="EBI-744782">
        <id>Q9Y5B8</id>
        <label>NME7</label>
    </interactant>
    <organismsDiffer>false</organismsDiffer>
    <experiments>3</experiments>
</comment>
<comment type="interaction">
    <interactant intactId="EBI-19944212">
        <id>A8MW99</id>
    </interactant>
    <interactant intactId="EBI-9057006">
        <id>Q9UJX0</id>
        <label>OSGIN1</label>
    </interactant>
    <organismsDiffer>false</organismsDiffer>
    <experiments>3</experiments>
</comment>
<comment type="interaction">
    <interactant intactId="EBI-19944212">
        <id>A8MW99</id>
    </interactant>
    <interactant intactId="EBI-711522">
        <id>Q15102</id>
        <label>PAFAH1B3</label>
    </interactant>
    <organismsDiffer>false</organismsDiffer>
    <experiments>3</experiments>
</comment>
<comment type="interaction">
    <interactant intactId="EBI-19944212">
        <id>A8MW99</id>
    </interactant>
    <interactant intactId="EBI-748888">
        <id>Q96FC7</id>
        <label>PHYHIPL</label>
    </interactant>
    <organismsDiffer>false</organismsDiffer>
    <experiments>3</experiments>
</comment>
<comment type="interaction">
    <interactant intactId="EBI-19944212">
        <id>A8MW99</id>
    </interactant>
    <interactant intactId="EBI-12394782">
        <id>Q9H4M7-2</id>
        <label>PLEKHA4</label>
    </interactant>
    <organismsDiffer>false</organismsDiffer>
    <experiments>3</experiments>
</comment>
<comment type="interaction">
    <interactant intactId="EBI-19944212">
        <id>A8MW99</id>
    </interactant>
    <interactant intactId="EBI-1055079">
        <id>O15160</id>
        <label>POLR1C</label>
    </interactant>
    <organismsDiffer>false</organismsDiffer>
    <experiments>3</experiments>
</comment>
<comment type="interaction">
    <interactant intactId="EBI-19944212">
        <id>A8MW99</id>
    </interactant>
    <interactant intactId="EBI-948428">
        <id>Q9Y2K5</id>
        <label>R3HDM2</label>
    </interactant>
    <organismsDiffer>false</organismsDiffer>
    <experiments>3</experiments>
</comment>
<comment type="interaction">
    <interactant intactId="EBI-19944212">
        <id>A8MW99</id>
    </interactant>
    <interactant intactId="EBI-25600376">
        <id>Q7Z4M0</id>
        <label>REC114</label>
    </interactant>
    <organismsDiffer>false</organismsDiffer>
    <experiments>3</experiments>
</comment>
<comment type="interaction">
    <interactant intactId="EBI-19944212">
        <id>A8MW99</id>
    </interactant>
    <interactant intactId="EBI-11119202">
        <id>Q9UL33-2</id>
        <label>TRAPPC2L</label>
    </interactant>
    <organismsDiffer>false</organismsDiffer>
    <experiments>3</experiments>
</comment>
<comment type="interaction">
    <interactant intactId="EBI-19944212">
        <id>A8MW99</id>
    </interactant>
    <interactant intactId="EBI-10262539">
        <id>Q8IWR1</id>
        <label>TRIM59</label>
    </interactant>
    <organismsDiffer>false</organismsDiffer>
    <experiments>3</experiments>
</comment>
<comment type="interaction">
    <interactant intactId="EBI-19944212">
        <id>A8MW99</id>
    </interactant>
    <interactant intactId="EBI-372432">
        <id>Q8WW01</id>
        <label>TSEN15</label>
    </interactant>
    <organismsDiffer>false</organismsDiffer>
    <experiments>3</experiments>
</comment>
<comment type="interaction">
    <interactant intactId="EBI-19944212">
        <id>A8MW99</id>
    </interactant>
    <interactant intactId="EBI-3918381">
        <id>Q96PN8</id>
        <label>TSSK3</label>
    </interactant>
    <organismsDiffer>false</organismsDiffer>
    <experiments>3</experiments>
</comment>
<comment type="interaction">
    <interactant intactId="EBI-19944212">
        <id>A8MW99</id>
    </interactant>
    <interactant intactId="EBI-739895">
        <id>Q8N6Y0</id>
        <label>USHBP1</label>
    </interactant>
    <organismsDiffer>false</organismsDiffer>
    <experiments>3</experiments>
</comment>
<comment type="interaction">
    <interactant intactId="EBI-19944212">
        <id>A8MW99</id>
    </interactant>
    <interactant intactId="EBI-7207091">
        <id>O14972</id>
        <label>VPS26C</label>
    </interactant>
    <organismsDiffer>false</organismsDiffer>
    <experiments>3</experiments>
</comment>
<comment type="subcellular location">
    <subcellularLocation>
        <location evidence="1">Chromosome</location>
    </subcellularLocation>
    <text evidence="1">Specifically localizes to unsynapsed chromosomal regions during meiosis. Located in discrete foci on the axes of meiotic chromosomes. The number of foci is highest at leptonema, decreases at zygonema and is strongly reduced in pachynema and subsequent stages.</text>
</comment>
<comment type="similarity">
    <text evidence="4">Belongs to the MEI4L family.</text>
</comment>
<protein>
    <recommendedName>
        <fullName>Meiosis-specific protein MEI4</fullName>
    </recommendedName>
</protein>
<name>MEI4_HUMAN</name>
<organism>
    <name type="scientific">Homo sapiens</name>
    <name type="common">Human</name>
    <dbReference type="NCBI Taxonomy" id="9606"/>
    <lineage>
        <taxon>Eukaryota</taxon>
        <taxon>Metazoa</taxon>
        <taxon>Chordata</taxon>
        <taxon>Craniata</taxon>
        <taxon>Vertebrata</taxon>
        <taxon>Euteleostomi</taxon>
        <taxon>Mammalia</taxon>
        <taxon>Eutheria</taxon>
        <taxon>Euarchontoglires</taxon>
        <taxon>Primates</taxon>
        <taxon>Haplorrhini</taxon>
        <taxon>Catarrhini</taxon>
        <taxon>Hominidae</taxon>
        <taxon>Homo</taxon>
    </lineage>
</organism>
<reference key="1">
    <citation type="journal article" date="2003" name="Nature">
        <title>The DNA sequence and analysis of human chromosome 6.</title>
        <authorList>
            <person name="Mungall A.J."/>
            <person name="Palmer S.A."/>
            <person name="Sims S.K."/>
            <person name="Edwards C.A."/>
            <person name="Ashurst J.L."/>
            <person name="Wilming L."/>
            <person name="Jones M.C."/>
            <person name="Horton R."/>
            <person name="Hunt S.E."/>
            <person name="Scott C.E."/>
            <person name="Gilbert J.G.R."/>
            <person name="Clamp M.E."/>
            <person name="Bethel G."/>
            <person name="Milne S."/>
            <person name="Ainscough R."/>
            <person name="Almeida J.P."/>
            <person name="Ambrose K.D."/>
            <person name="Andrews T.D."/>
            <person name="Ashwell R.I.S."/>
            <person name="Babbage A.K."/>
            <person name="Bagguley C.L."/>
            <person name="Bailey J."/>
            <person name="Banerjee R."/>
            <person name="Barker D.J."/>
            <person name="Barlow K.F."/>
            <person name="Bates K."/>
            <person name="Beare D.M."/>
            <person name="Beasley H."/>
            <person name="Beasley O."/>
            <person name="Bird C.P."/>
            <person name="Blakey S.E."/>
            <person name="Bray-Allen S."/>
            <person name="Brook J."/>
            <person name="Brown A.J."/>
            <person name="Brown J.Y."/>
            <person name="Burford D.C."/>
            <person name="Burrill W."/>
            <person name="Burton J."/>
            <person name="Carder C."/>
            <person name="Carter N.P."/>
            <person name="Chapman J.C."/>
            <person name="Clark S.Y."/>
            <person name="Clark G."/>
            <person name="Clee C.M."/>
            <person name="Clegg S."/>
            <person name="Cobley V."/>
            <person name="Collier R.E."/>
            <person name="Collins J.E."/>
            <person name="Colman L.K."/>
            <person name="Corby N.R."/>
            <person name="Coville G.J."/>
            <person name="Culley K.M."/>
            <person name="Dhami P."/>
            <person name="Davies J."/>
            <person name="Dunn M."/>
            <person name="Earthrowl M.E."/>
            <person name="Ellington A.E."/>
            <person name="Evans K.A."/>
            <person name="Faulkner L."/>
            <person name="Francis M.D."/>
            <person name="Frankish A."/>
            <person name="Frankland J."/>
            <person name="French L."/>
            <person name="Garner P."/>
            <person name="Garnett J."/>
            <person name="Ghori M.J."/>
            <person name="Gilby L.M."/>
            <person name="Gillson C.J."/>
            <person name="Glithero R.J."/>
            <person name="Grafham D.V."/>
            <person name="Grant M."/>
            <person name="Gribble S."/>
            <person name="Griffiths C."/>
            <person name="Griffiths M.N.D."/>
            <person name="Hall R."/>
            <person name="Halls K.S."/>
            <person name="Hammond S."/>
            <person name="Harley J.L."/>
            <person name="Hart E.A."/>
            <person name="Heath P.D."/>
            <person name="Heathcott R."/>
            <person name="Holmes S.J."/>
            <person name="Howden P.J."/>
            <person name="Howe K.L."/>
            <person name="Howell G.R."/>
            <person name="Huckle E."/>
            <person name="Humphray S.J."/>
            <person name="Humphries M.D."/>
            <person name="Hunt A.R."/>
            <person name="Johnson C.M."/>
            <person name="Joy A.A."/>
            <person name="Kay M."/>
            <person name="Keenan S.J."/>
            <person name="Kimberley A.M."/>
            <person name="King A."/>
            <person name="Laird G.K."/>
            <person name="Langford C."/>
            <person name="Lawlor S."/>
            <person name="Leongamornlert D.A."/>
            <person name="Leversha M."/>
            <person name="Lloyd C.R."/>
            <person name="Lloyd D.M."/>
            <person name="Loveland J.E."/>
            <person name="Lovell J."/>
            <person name="Martin S."/>
            <person name="Mashreghi-Mohammadi M."/>
            <person name="Maslen G.L."/>
            <person name="Matthews L."/>
            <person name="McCann O.T."/>
            <person name="McLaren S.J."/>
            <person name="McLay K."/>
            <person name="McMurray A."/>
            <person name="Moore M.J.F."/>
            <person name="Mullikin J.C."/>
            <person name="Niblett D."/>
            <person name="Nickerson T."/>
            <person name="Novik K.L."/>
            <person name="Oliver K."/>
            <person name="Overton-Larty E.K."/>
            <person name="Parker A."/>
            <person name="Patel R."/>
            <person name="Pearce A.V."/>
            <person name="Peck A.I."/>
            <person name="Phillimore B.J.C.T."/>
            <person name="Phillips S."/>
            <person name="Plumb R.W."/>
            <person name="Porter K.M."/>
            <person name="Ramsey Y."/>
            <person name="Ranby S.A."/>
            <person name="Rice C.M."/>
            <person name="Ross M.T."/>
            <person name="Searle S.M."/>
            <person name="Sehra H.K."/>
            <person name="Sheridan E."/>
            <person name="Skuce C.D."/>
            <person name="Smith S."/>
            <person name="Smith M."/>
            <person name="Spraggon L."/>
            <person name="Squares S.L."/>
            <person name="Steward C.A."/>
            <person name="Sycamore N."/>
            <person name="Tamlyn-Hall G."/>
            <person name="Tester J."/>
            <person name="Theaker A.J."/>
            <person name="Thomas D.W."/>
            <person name="Thorpe A."/>
            <person name="Tracey A."/>
            <person name="Tromans A."/>
            <person name="Tubby B."/>
            <person name="Wall M."/>
            <person name="Wallis J.M."/>
            <person name="West A.P."/>
            <person name="White S.S."/>
            <person name="Whitehead S.L."/>
            <person name="Whittaker H."/>
            <person name="Wild A."/>
            <person name="Willey D.J."/>
            <person name="Wilmer T.E."/>
            <person name="Wood J.M."/>
            <person name="Wray P.W."/>
            <person name="Wyatt J.C."/>
            <person name="Young L."/>
            <person name="Younger R.M."/>
            <person name="Bentley D.R."/>
            <person name="Coulson A."/>
            <person name="Durbin R.M."/>
            <person name="Hubbard T."/>
            <person name="Sulston J.E."/>
            <person name="Dunham I."/>
            <person name="Rogers J."/>
            <person name="Beck S."/>
        </authorList>
    </citation>
    <scope>NUCLEOTIDE SEQUENCE [LARGE SCALE GENOMIC DNA]</scope>
</reference>
<reference key="2">
    <citation type="journal article" date="2020" name="J. Med. Genet.">
        <title>Homozygous mutations in REC114 cause female infertility characterised by multiple pronuclei formation and early embryonic arrest.</title>
        <authorList>
            <person name="Wang W."/>
            <person name="Dong J."/>
            <person name="Chen B."/>
            <person name="Du J."/>
            <person name="Kuang Y."/>
            <person name="Sun X."/>
            <person name="Fu J."/>
            <person name="Li B."/>
            <person name="Mu J."/>
            <person name="Zhang Z."/>
            <person name="Zhou Z."/>
            <person name="Lin Z."/>
            <person name="Wu L."/>
            <person name="Yan Z."/>
            <person name="Mao X."/>
            <person name="Li Q."/>
            <person name="He L."/>
            <person name="Wang L."/>
            <person name="Sang Q."/>
        </authorList>
    </citation>
    <scope>INTERACTION WITH REC114</scope>
</reference>
<feature type="chain" id="PRO_0000343703" description="Meiosis-specific protein MEI4">
    <location>
        <begin position="1"/>
        <end position="385"/>
    </location>
</feature>
<feature type="region of interest" description="Interaction with REC114" evidence="1">
    <location>
        <begin position="1"/>
        <end position="126"/>
    </location>
</feature>
<feature type="region of interest" description="Disordered" evidence="2">
    <location>
        <begin position="86"/>
        <end position="110"/>
    </location>
</feature>
<feature type="compositionally biased region" description="Polar residues" evidence="2">
    <location>
        <begin position="92"/>
        <end position="107"/>
    </location>
</feature>
<accession>A8MW99</accession>
<accession>R4GMV8</accession>
<keyword id="KW-0158">Chromosome</keyword>
<keyword id="KW-0233">DNA recombination</keyword>
<keyword id="KW-0469">Meiosis</keyword>
<keyword id="KW-1185">Reference proteome</keyword>
<sequence length="385" mass="44024">MDVQKWYLRTSKLALALAIIRSKPADKSSREYTEHLAMLLSEEQSKWRSKVEILEAEVMQLRQKLLVSRLCSGSFKSGYVSSQLEAQEPKSSESTLTSMEDSGCDLSNEQRTESSDLSQHFVESCTPTHFPPLPLVKRPCAILQNPLSSHMQFLQYLLELKNLTESGNLKRDLTHFEKDSSTVSDSVFQLLDGLITFYRNPKLPFSRFWTEAVGTLASLISDYNLSSHILKKCSKKLEEFEKTLLHAILGNNHINQFQVQHYVSQSLVTLGNCSLLRKSIISLLLSEVNGFADDLGAINQEQASYDVSRYENIFYLFWVLEQLLQKETEEGNTSSIGHDDQEIKKFLQKHDETIFQLSDAFPLFTFYLWRVGILLSSAQIETLRK</sequence>
<proteinExistence type="evidence at protein level"/>
<evidence type="ECO:0000250" key="1">
    <source>
        <dbReference type="UniProtKB" id="Q8BRM6"/>
    </source>
</evidence>
<evidence type="ECO:0000256" key="2">
    <source>
        <dbReference type="SAM" id="MobiDB-lite"/>
    </source>
</evidence>
<evidence type="ECO:0000269" key="3">
    <source>
    </source>
</evidence>
<evidence type="ECO:0000305" key="4"/>
<evidence type="ECO:0000312" key="5">
    <source>
        <dbReference type="HGNC" id="HGNC:43638"/>
    </source>
</evidence>
<dbReference type="EMBL" id="AL590785">
    <property type="status" value="NOT_ANNOTATED_CDS"/>
    <property type="molecule type" value="Genomic_DNA"/>
</dbReference>
<dbReference type="EMBL" id="AL591500">
    <property type="status" value="NOT_ANNOTATED_CDS"/>
    <property type="molecule type" value="Genomic_DNA"/>
</dbReference>
<dbReference type="CCDS" id="CCDS64463.1"/>
<dbReference type="RefSeq" id="NP_001269065.1">
    <property type="nucleotide sequence ID" value="NM_001282136.3"/>
</dbReference>
<dbReference type="RefSeq" id="NP_001309176.1">
    <property type="nucleotide sequence ID" value="NM_001322247.2"/>
</dbReference>
<dbReference type="SMR" id="A8MW99"/>
<dbReference type="BioGRID" id="3192470">
    <property type="interactions" value="39"/>
</dbReference>
<dbReference type="ComplexPortal" id="CPX-2358">
    <property type="entry name" value="CCDC36-MEI4-REC114 meiotic recombination initiation complex"/>
</dbReference>
<dbReference type="FunCoup" id="A8MW99">
    <property type="interactions" value="13"/>
</dbReference>
<dbReference type="IntAct" id="A8MW99">
    <property type="interactions" value="38"/>
</dbReference>
<dbReference type="STRING" id="9606.ENSP00000473370"/>
<dbReference type="GlyGen" id="A8MW99">
    <property type="glycosylation" value="1 site, 1 N-linked glycan (1 site)"/>
</dbReference>
<dbReference type="PhosphoSitePlus" id="A8MW99"/>
<dbReference type="BioMuta" id="MEI4"/>
<dbReference type="jPOST" id="A8MW99"/>
<dbReference type="MassIVE" id="A8MW99"/>
<dbReference type="PaxDb" id="9606-ENSP00000473370"/>
<dbReference type="PeptideAtlas" id="A8MW99"/>
<dbReference type="ProteomicsDB" id="2233"/>
<dbReference type="Antibodypedia" id="77185">
    <property type="antibodies" value="21 antibodies from 4 providers"/>
</dbReference>
<dbReference type="DNASU" id="101928601"/>
<dbReference type="Ensembl" id="ENST00000602452.3">
    <property type="protein sequence ID" value="ENSP00000473370.1"/>
    <property type="gene ID" value="ENSG00000269964.4"/>
</dbReference>
<dbReference type="Ensembl" id="ENST00000649759.1">
    <property type="protein sequence ID" value="ENSP00000496917.1"/>
    <property type="gene ID" value="ENSG00000269964.4"/>
</dbReference>
<dbReference type="Ensembl" id="ENST00000684080.1">
    <property type="protein sequence ID" value="ENSP00000507827.1"/>
    <property type="gene ID" value="ENSG00000269964.4"/>
</dbReference>
<dbReference type="GeneID" id="101928601"/>
<dbReference type="KEGG" id="hsa:101928601"/>
<dbReference type="MANE-Select" id="ENST00000684080.1">
    <property type="protein sequence ID" value="ENSP00000507827.1"/>
    <property type="RefSeq nucleotide sequence ID" value="NM_001322247.2"/>
    <property type="RefSeq protein sequence ID" value="NP_001309176.1"/>
</dbReference>
<dbReference type="UCSC" id="uc032xbm.2">
    <property type="organism name" value="human"/>
</dbReference>
<dbReference type="AGR" id="HGNC:43638"/>
<dbReference type="CTD" id="101928601"/>
<dbReference type="DisGeNET" id="101928601"/>
<dbReference type="GeneCards" id="MEI4"/>
<dbReference type="HGNC" id="HGNC:43638">
    <property type="gene designation" value="MEI4"/>
</dbReference>
<dbReference type="HPA" id="ENSG00000269964">
    <property type="expression patterns" value="Tissue enhanced (kidney, testis, thyroid gland)"/>
</dbReference>
<dbReference type="MIM" id="618417">
    <property type="type" value="gene"/>
</dbReference>
<dbReference type="neXtProt" id="NX_A8MW99"/>
<dbReference type="OpenTargets" id="ENSG00000269964"/>
<dbReference type="VEuPathDB" id="HostDB:ENSG00000269964"/>
<dbReference type="eggNOG" id="ENOG502S31K">
    <property type="taxonomic scope" value="Eukaryota"/>
</dbReference>
<dbReference type="GeneTree" id="ENSGT00390000013856"/>
<dbReference type="HOGENOM" id="CLU_055456_0_0_1"/>
<dbReference type="InParanoid" id="A8MW99"/>
<dbReference type="OMA" id="MYDITQY"/>
<dbReference type="OrthoDB" id="6351423at2759"/>
<dbReference type="PAN-GO" id="A8MW99">
    <property type="GO annotations" value="5 GO annotations based on evolutionary models"/>
</dbReference>
<dbReference type="PhylomeDB" id="A8MW99"/>
<dbReference type="PathwayCommons" id="A8MW99"/>
<dbReference type="SignaLink" id="A8MW99"/>
<dbReference type="BioGRID-ORCS" id="101928601">
    <property type="hits" value="6 hits in 894 CRISPR screens"/>
</dbReference>
<dbReference type="ChiTaRS" id="MEI4">
    <property type="organism name" value="human"/>
</dbReference>
<dbReference type="Pharos" id="A8MW99">
    <property type="development level" value="Tdark"/>
</dbReference>
<dbReference type="PRO" id="PR:A8MW99"/>
<dbReference type="Proteomes" id="UP000005640">
    <property type="component" value="Chromosome 6"/>
</dbReference>
<dbReference type="RNAct" id="A8MW99">
    <property type="molecule type" value="protein"/>
</dbReference>
<dbReference type="Bgee" id="ENSG00000269964">
    <property type="expression patterns" value="Expressed in male germ line stem cell (sensu Vertebrata) in testis and 44 other cell types or tissues"/>
</dbReference>
<dbReference type="GO" id="GO:0005694">
    <property type="term" value="C:chromosome"/>
    <property type="evidence" value="ECO:0000250"/>
    <property type="project" value="UniProtKB"/>
</dbReference>
<dbReference type="GO" id="GO:0000800">
    <property type="term" value="C:lateral element"/>
    <property type="evidence" value="ECO:0000250"/>
    <property type="project" value="UniProtKB"/>
</dbReference>
<dbReference type="GO" id="GO:0006310">
    <property type="term" value="P:DNA recombination"/>
    <property type="evidence" value="ECO:0007669"/>
    <property type="project" value="UniProtKB-KW"/>
</dbReference>
<dbReference type="GO" id="GO:0007129">
    <property type="term" value="P:homologous chromosome pairing at meiosis"/>
    <property type="evidence" value="ECO:0000250"/>
    <property type="project" value="UniProtKB"/>
</dbReference>
<dbReference type="GO" id="GO:0042138">
    <property type="term" value="P:meiotic DNA double-strand break formation"/>
    <property type="evidence" value="ECO:0000250"/>
    <property type="project" value="UniProtKB"/>
</dbReference>
<dbReference type="GO" id="GO:0048477">
    <property type="term" value="P:oogenesis"/>
    <property type="evidence" value="ECO:0000250"/>
    <property type="project" value="UniProtKB"/>
</dbReference>
<dbReference type="GO" id="GO:0007283">
    <property type="term" value="P:spermatogenesis"/>
    <property type="evidence" value="ECO:0000250"/>
    <property type="project" value="UniProtKB"/>
</dbReference>
<dbReference type="InterPro" id="IPR025888">
    <property type="entry name" value="MEI4"/>
</dbReference>
<dbReference type="PANTHER" id="PTHR28575">
    <property type="entry name" value="MEIOSIS-SPECIFIC PROTEIN MEI4"/>
    <property type="match status" value="1"/>
</dbReference>
<dbReference type="PANTHER" id="PTHR28575:SF1">
    <property type="entry name" value="MEIOSIS-SPECIFIC PROTEIN MEI4"/>
    <property type="match status" value="1"/>
</dbReference>
<dbReference type="Pfam" id="PF13971">
    <property type="entry name" value="Mei4"/>
    <property type="match status" value="1"/>
</dbReference>
<gene>
    <name evidence="5" type="primary">MEI4</name>
</gene>